<keyword id="KW-0175">Coiled coil</keyword>
<keyword id="KW-0342">GTP-binding</keyword>
<keyword id="KW-0547">Nucleotide-binding</keyword>
<keyword id="KW-1185">Reference proteome</keyword>
<gene>
    <name evidence="4" type="primary">IAN13</name>
    <name evidence="7" type="ordered locus">At4g09950</name>
    <name evidence="8" type="ORF">T5L19.80</name>
</gene>
<organism>
    <name type="scientific">Arabidopsis thaliana</name>
    <name type="common">Mouse-ear cress</name>
    <dbReference type="NCBI Taxonomy" id="3702"/>
    <lineage>
        <taxon>Eukaryota</taxon>
        <taxon>Viridiplantae</taxon>
        <taxon>Streptophyta</taxon>
        <taxon>Embryophyta</taxon>
        <taxon>Tracheophyta</taxon>
        <taxon>Spermatophyta</taxon>
        <taxon>Magnoliopsida</taxon>
        <taxon>eudicotyledons</taxon>
        <taxon>Gunneridae</taxon>
        <taxon>Pentapetalae</taxon>
        <taxon>rosids</taxon>
        <taxon>malvids</taxon>
        <taxon>Brassicales</taxon>
        <taxon>Brassicaceae</taxon>
        <taxon>Camelineae</taxon>
        <taxon>Arabidopsis</taxon>
    </lineage>
</organism>
<feature type="chain" id="PRO_0000438035" description="Immune-associated nucleotide-binding protein 13">
    <location>
        <begin position="1"/>
        <end position="336"/>
    </location>
</feature>
<feature type="domain" description="AIG1-type G" evidence="3">
    <location>
        <begin position="15"/>
        <end position="221"/>
    </location>
</feature>
<feature type="region of interest" description="G1" evidence="3">
    <location>
        <begin position="24"/>
        <end position="31"/>
    </location>
</feature>
<feature type="region of interest" description="G2" evidence="3">
    <location>
        <begin position="51"/>
        <end position="55"/>
    </location>
</feature>
<feature type="region of interest" description="G3" evidence="3">
    <location>
        <begin position="73"/>
        <end position="76"/>
    </location>
</feature>
<feature type="region of interest" description="G4" evidence="3">
    <location>
        <begin position="143"/>
        <end position="146"/>
    </location>
</feature>
<feature type="region of interest" description="G5" evidence="3">
    <location>
        <begin position="179"/>
        <end position="181"/>
    </location>
</feature>
<feature type="coiled-coil region" evidence="2">
    <location>
        <begin position="265"/>
        <end position="328"/>
    </location>
</feature>
<feature type="binding site" evidence="1">
    <location>
        <begin position="24"/>
        <end position="32"/>
    </location>
    <ligand>
        <name>GTP</name>
        <dbReference type="ChEBI" id="CHEBI:37565"/>
    </ligand>
</feature>
<feature type="binding site" evidence="1">
    <location>
        <position position="45"/>
    </location>
    <ligand>
        <name>GTP</name>
        <dbReference type="ChEBI" id="CHEBI:37565"/>
    </ligand>
</feature>
<feature type="binding site" evidence="1">
    <location>
        <position position="180"/>
    </location>
    <ligand>
        <name>GTP</name>
        <dbReference type="ChEBI" id="CHEBI:37565"/>
    </ligand>
</feature>
<comment type="tissue specificity">
    <text evidence="6">Expressed in pollen grains.</text>
</comment>
<comment type="developmental stage">
    <text evidence="6">Expressed at the late stage of silique development.</text>
</comment>
<comment type="induction">
    <text evidence="6">Down-regulated by aphid infection, 2-aminoethoxyvinylglycine (AVG), high CO(2), isoxaben, and propiconazole treatments. Up-regulated by brassinolides.</text>
</comment>
<comment type="similarity">
    <text evidence="5">Belongs to the TRAFAC class TrmE-Era-EngA-EngB-Septin-like GTPase superfamily. AIG1/Toc34/Toc159-like paraseptin GTPase family. IAN subfamily.</text>
</comment>
<proteinExistence type="inferred from homology"/>
<protein>
    <recommendedName>
        <fullName evidence="4">Immune-associated nucleotide-binding protein 13</fullName>
        <shortName evidence="4">AtIAN13</shortName>
    </recommendedName>
    <alternativeName>
        <fullName evidence="5">AIG1-like protein</fullName>
    </alternativeName>
</protein>
<evidence type="ECO:0000250" key="1">
    <source>
        <dbReference type="UniProtKB" id="Q8NHV1"/>
    </source>
</evidence>
<evidence type="ECO:0000255" key="2"/>
<evidence type="ECO:0000255" key="3">
    <source>
        <dbReference type="PROSITE-ProRule" id="PRU01057"/>
    </source>
</evidence>
<evidence type="ECO:0000303" key="4">
    <source>
    </source>
</evidence>
<evidence type="ECO:0000305" key="5"/>
<evidence type="ECO:0000305" key="6">
    <source>
    </source>
</evidence>
<evidence type="ECO:0000312" key="7">
    <source>
        <dbReference type="Araport" id="AT4G09950"/>
    </source>
</evidence>
<evidence type="ECO:0000312" key="8">
    <source>
        <dbReference type="EMBL" id="CAB39619.1"/>
    </source>
</evidence>
<dbReference type="EMBL" id="AL049481">
    <property type="protein sequence ID" value="CAB39619.1"/>
    <property type="molecule type" value="Genomic_DNA"/>
</dbReference>
<dbReference type="EMBL" id="AL161516">
    <property type="protein sequence ID" value="CAB78118.1"/>
    <property type="molecule type" value="Genomic_DNA"/>
</dbReference>
<dbReference type="EMBL" id="CP002687">
    <property type="protein sequence ID" value="AEE82815.1"/>
    <property type="molecule type" value="Genomic_DNA"/>
</dbReference>
<dbReference type="PIR" id="T03999">
    <property type="entry name" value="T03999"/>
</dbReference>
<dbReference type="RefSeq" id="NP_192733.1">
    <property type="nucleotide sequence ID" value="NM_117063.2"/>
</dbReference>
<dbReference type="SMR" id="Q9T0F4"/>
<dbReference type="FunCoup" id="Q9T0F4">
    <property type="interactions" value="50"/>
</dbReference>
<dbReference type="STRING" id="3702.Q9T0F4"/>
<dbReference type="PaxDb" id="3702-AT4G09950.1"/>
<dbReference type="ProteomicsDB" id="232163"/>
<dbReference type="EnsemblPlants" id="AT4G09950.1">
    <property type="protein sequence ID" value="AT4G09950.1"/>
    <property type="gene ID" value="AT4G09950"/>
</dbReference>
<dbReference type="GeneID" id="826585"/>
<dbReference type="Gramene" id="AT4G09950.1">
    <property type="protein sequence ID" value="AT4G09950.1"/>
    <property type="gene ID" value="AT4G09950"/>
</dbReference>
<dbReference type="KEGG" id="ath:AT4G09950"/>
<dbReference type="Araport" id="AT4G09950"/>
<dbReference type="TAIR" id="AT4G09950">
    <property type="gene designation" value="IAN13"/>
</dbReference>
<dbReference type="eggNOG" id="ENOG502R7PE">
    <property type="taxonomic scope" value="Eukaryota"/>
</dbReference>
<dbReference type="HOGENOM" id="CLU_010468_0_1_1"/>
<dbReference type="InParanoid" id="Q9T0F4"/>
<dbReference type="OMA" id="SRYSIML"/>
<dbReference type="PhylomeDB" id="Q9T0F4"/>
<dbReference type="PRO" id="PR:Q9T0F4"/>
<dbReference type="Proteomes" id="UP000006548">
    <property type="component" value="Chromosome 4"/>
</dbReference>
<dbReference type="ExpressionAtlas" id="Q9T0F4">
    <property type="expression patterns" value="baseline and differential"/>
</dbReference>
<dbReference type="GO" id="GO:0005525">
    <property type="term" value="F:GTP binding"/>
    <property type="evidence" value="ECO:0007669"/>
    <property type="project" value="UniProtKB-KW"/>
</dbReference>
<dbReference type="CDD" id="cd01852">
    <property type="entry name" value="AIG1"/>
    <property type="match status" value="1"/>
</dbReference>
<dbReference type="FunFam" id="3.40.50.300:FF:000840">
    <property type="entry name" value="Immune-associated nucleotide-binding protein 9"/>
    <property type="match status" value="1"/>
</dbReference>
<dbReference type="Gene3D" id="3.40.50.300">
    <property type="entry name" value="P-loop containing nucleotide triphosphate hydrolases"/>
    <property type="match status" value="1"/>
</dbReference>
<dbReference type="InterPro" id="IPR006703">
    <property type="entry name" value="G_AIG1"/>
</dbReference>
<dbReference type="InterPro" id="IPR045058">
    <property type="entry name" value="GIMA/IAN/Toc"/>
</dbReference>
<dbReference type="InterPro" id="IPR027417">
    <property type="entry name" value="P-loop_NTPase"/>
</dbReference>
<dbReference type="PANTHER" id="PTHR10903">
    <property type="entry name" value="GTPASE, IMAP FAMILY MEMBER-RELATED"/>
    <property type="match status" value="1"/>
</dbReference>
<dbReference type="PANTHER" id="PTHR10903:SF122">
    <property type="entry name" value="IMMUNE-ASSOCIATED NUCLEOTIDE-BINDING PROTEIN 11-RELATED"/>
    <property type="match status" value="1"/>
</dbReference>
<dbReference type="Pfam" id="PF04548">
    <property type="entry name" value="AIG1"/>
    <property type="match status" value="1"/>
</dbReference>
<dbReference type="SUPFAM" id="SSF52540">
    <property type="entry name" value="P-loop containing nucleoside triphosphate hydrolases"/>
    <property type="match status" value="1"/>
</dbReference>
<dbReference type="PROSITE" id="PS51720">
    <property type="entry name" value="G_AIG1"/>
    <property type="match status" value="1"/>
</dbReference>
<accession>Q9T0F4</accession>
<name>IAN13_ARATH</name>
<sequence>MVVDSSALNVENDWKPERTLVLLGRTGNGKSATGNSILGKTMFQSKARGKFITKECKLHKSKLPNGLTINVIDTPGLFSASSTTDFTIREIVRCLLLAKGGIDAVLLVFSLRNRLTEEEQSTLRTLKILFGSQIVDYIIVVFTNEDALECGETLDDYLEDCPEFQEILEECDDRKVLFDNSYNAPVSKKDRQVHDLLNLVEQISKKNNGKSYMADLSHELRENEATIKEKQKQIEEMKGWSSKQEISQMKKELEKSHNEMLEGIKEKISNQLKESLEDVKEQLAKAQAEREETEKKMNEIQKLSSDEIRRLREQLNKAEKETASLRTELNKKCTVL</sequence>
<reference key="1">
    <citation type="journal article" date="1999" name="Nature">
        <title>Sequence and analysis of chromosome 4 of the plant Arabidopsis thaliana.</title>
        <authorList>
            <person name="Mayer K.F.X."/>
            <person name="Schueller C."/>
            <person name="Wambutt R."/>
            <person name="Murphy G."/>
            <person name="Volckaert G."/>
            <person name="Pohl T."/>
            <person name="Duesterhoeft A."/>
            <person name="Stiekema W."/>
            <person name="Entian K.-D."/>
            <person name="Terryn N."/>
            <person name="Harris B."/>
            <person name="Ansorge W."/>
            <person name="Brandt P."/>
            <person name="Grivell L.A."/>
            <person name="Rieger M."/>
            <person name="Weichselgartner M."/>
            <person name="de Simone V."/>
            <person name="Obermaier B."/>
            <person name="Mache R."/>
            <person name="Mueller M."/>
            <person name="Kreis M."/>
            <person name="Delseny M."/>
            <person name="Puigdomenech P."/>
            <person name="Watson M."/>
            <person name="Schmidtheini T."/>
            <person name="Reichert B."/>
            <person name="Portetelle D."/>
            <person name="Perez-Alonso M."/>
            <person name="Boutry M."/>
            <person name="Bancroft I."/>
            <person name="Vos P."/>
            <person name="Hoheisel J."/>
            <person name="Zimmermann W."/>
            <person name="Wedler H."/>
            <person name="Ridley P."/>
            <person name="Langham S.-A."/>
            <person name="McCullagh B."/>
            <person name="Bilham L."/>
            <person name="Robben J."/>
            <person name="van der Schueren J."/>
            <person name="Grymonprez B."/>
            <person name="Chuang Y.-J."/>
            <person name="Vandenbussche F."/>
            <person name="Braeken M."/>
            <person name="Weltjens I."/>
            <person name="Voet M."/>
            <person name="Bastiaens I."/>
            <person name="Aert R."/>
            <person name="Defoor E."/>
            <person name="Weitzenegger T."/>
            <person name="Bothe G."/>
            <person name="Ramsperger U."/>
            <person name="Hilbert H."/>
            <person name="Braun M."/>
            <person name="Holzer E."/>
            <person name="Brandt A."/>
            <person name="Peters S."/>
            <person name="van Staveren M."/>
            <person name="Dirkse W."/>
            <person name="Mooijman P."/>
            <person name="Klein Lankhorst R."/>
            <person name="Rose M."/>
            <person name="Hauf J."/>
            <person name="Koetter P."/>
            <person name="Berneiser S."/>
            <person name="Hempel S."/>
            <person name="Feldpausch M."/>
            <person name="Lamberth S."/>
            <person name="Van den Daele H."/>
            <person name="De Keyser A."/>
            <person name="Buysshaert C."/>
            <person name="Gielen J."/>
            <person name="Villarroel R."/>
            <person name="De Clercq R."/>
            <person name="van Montagu M."/>
            <person name="Rogers J."/>
            <person name="Cronin A."/>
            <person name="Quail M.A."/>
            <person name="Bray-Allen S."/>
            <person name="Clark L."/>
            <person name="Doggett J."/>
            <person name="Hall S."/>
            <person name="Kay M."/>
            <person name="Lennard N."/>
            <person name="McLay K."/>
            <person name="Mayes R."/>
            <person name="Pettett A."/>
            <person name="Rajandream M.A."/>
            <person name="Lyne M."/>
            <person name="Benes V."/>
            <person name="Rechmann S."/>
            <person name="Borkova D."/>
            <person name="Bloecker H."/>
            <person name="Scharfe M."/>
            <person name="Grimm M."/>
            <person name="Loehnert T.-H."/>
            <person name="Dose S."/>
            <person name="de Haan M."/>
            <person name="Maarse A.C."/>
            <person name="Schaefer M."/>
            <person name="Mueller-Auer S."/>
            <person name="Gabel C."/>
            <person name="Fuchs M."/>
            <person name="Fartmann B."/>
            <person name="Granderath K."/>
            <person name="Dauner D."/>
            <person name="Herzl A."/>
            <person name="Neumann S."/>
            <person name="Argiriou A."/>
            <person name="Vitale D."/>
            <person name="Liguori R."/>
            <person name="Piravandi E."/>
            <person name="Massenet O."/>
            <person name="Quigley F."/>
            <person name="Clabauld G."/>
            <person name="Muendlein A."/>
            <person name="Felber R."/>
            <person name="Schnabl S."/>
            <person name="Hiller R."/>
            <person name="Schmidt W."/>
            <person name="Lecharny A."/>
            <person name="Aubourg S."/>
            <person name="Chefdor F."/>
            <person name="Cooke R."/>
            <person name="Berger C."/>
            <person name="Monfort A."/>
            <person name="Casacuberta E."/>
            <person name="Gibbons T."/>
            <person name="Weber N."/>
            <person name="Vandenbol M."/>
            <person name="Bargues M."/>
            <person name="Terol J."/>
            <person name="Torres A."/>
            <person name="Perez-Perez A."/>
            <person name="Purnelle B."/>
            <person name="Bent E."/>
            <person name="Johnson S."/>
            <person name="Tacon D."/>
            <person name="Jesse T."/>
            <person name="Heijnen L."/>
            <person name="Schwarz S."/>
            <person name="Scholler P."/>
            <person name="Heber S."/>
            <person name="Francs P."/>
            <person name="Bielke C."/>
            <person name="Frishman D."/>
            <person name="Haase D."/>
            <person name="Lemcke K."/>
            <person name="Mewes H.-W."/>
            <person name="Stocker S."/>
            <person name="Zaccaria P."/>
            <person name="Bevan M."/>
            <person name="Wilson R.K."/>
            <person name="de la Bastide M."/>
            <person name="Habermann K."/>
            <person name="Parnell L."/>
            <person name="Dedhia N."/>
            <person name="Gnoj L."/>
            <person name="Schutz K."/>
            <person name="Huang E."/>
            <person name="Spiegel L."/>
            <person name="Sekhon M."/>
            <person name="Murray J."/>
            <person name="Sheet P."/>
            <person name="Cordes M."/>
            <person name="Abu-Threideh J."/>
            <person name="Stoneking T."/>
            <person name="Kalicki J."/>
            <person name="Graves T."/>
            <person name="Harmon G."/>
            <person name="Edwards J."/>
            <person name="Latreille P."/>
            <person name="Courtney L."/>
            <person name="Cloud J."/>
            <person name="Abbott A."/>
            <person name="Scott K."/>
            <person name="Johnson D."/>
            <person name="Minx P."/>
            <person name="Bentley D."/>
            <person name="Fulton B."/>
            <person name="Miller N."/>
            <person name="Greco T."/>
            <person name="Kemp K."/>
            <person name="Kramer J."/>
            <person name="Fulton L."/>
            <person name="Mardis E."/>
            <person name="Dante M."/>
            <person name="Pepin K."/>
            <person name="Hillier L.W."/>
            <person name="Nelson J."/>
            <person name="Spieth J."/>
            <person name="Ryan E."/>
            <person name="Andrews S."/>
            <person name="Geisel C."/>
            <person name="Layman D."/>
            <person name="Du H."/>
            <person name="Ali J."/>
            <person name="Berghoff A."/>
            <person name="Jones K."/>
            <person name="Drone K."/>
            <person name="Cotton M."/>
            <person name="Joshu C."/>
            <person name="Antonoiu B."/>
            <person name="Zidanic M."/>
            <person name="Strong C."/>
            <person name="Sun H."/>
            <person name="Lamar B."/>
            <person name="Yordan C."/>
            <person name="Ma P."/>
            <person name="Zhong J."/>
            <person name="Preston R."/>
            <person name="Vil D."/>
            <person name="Shekher M."/>
            <person name="Matero A."/>
            <person name="Shah R."/>
            <person name="Swaby I.K."/>
            <person name="O'Shaughnessy A."/>
            <person name="Rodriguez M."/>
            <person name="Hoffman J."/>
            <person name="Till S."/>
            <person name="Granat S."/>
            <person name="Shohdy N."/>
            <person name="Hasegawa A."/>
            <person name="Hameed A."/>
            <person name="Lodhi M."/>
            <person name="Johnson A."/>
            <person name="Chen E."/>
            <person name="Marra M.A."/>
            <person name="Martienssen R."/>
            <person name="McCombie W.R."/>
        </authorList>
    </citation>
    <scope>NUCLEOTIDE SEQUENCE [LARGE SCALE GENOMIC DNA]</scope>
    <source>
        <strain>cv. Columbia</strain>
    </source>
</reference>
<reference key="2">
    <citation type="journal article" date="2017" name="Plant J.">
        <title>Araport11: a complete reannotation of the Arabidopsis thaliana reference genome.</title>
        <authorList>
            <person name="Cheng C.Y."/>
            <person name="Krishnakumar V."/>
            <person name="Chan A.P."/>
            <person name="Thibaud-Nissen F."/>
            <person name="Schobel S."/>
            <person name="Town C.D."/>
        </authorList>
    </citation>
    <scope>GENOME REANNOTATION</scope>
    <source>
        <strain>cv. Columbia</strain>
    </source>
</reference>
<reference key="3">
    <citation type="journal article" date="2008" name="J. Plant Physiol.">
        <title>Computational identification and analysis of immune-associated nucleotide gene family in Arabidopsis thaliana.</title>
        <authorList>
            <person name="Liu C."/>
            <person name="Wang T."/>
            <person name="Zhang W."/>
            <person name="Li X."/>
        </authorList>
    </citation>
    <scope>GENE FAMILY</scope>
    <scope>NOMENCLATURE</scope>
</reference>